<sequence>MSNGLPISIGRPCTHDSQRSLSAPNSRIHSGFNSLLDTDLPMVHSEGTSTPTQLLRHPNIWFGNLPPPPRRPQDNRDFSPLHPLVFPGHHSQLRHVHETQQVQQTCPGKLKLSGAEELPPAPQRQHSLPLHITRPSRFPHHFHARRPDVLPSVPDHGPVLAETKPRTSVRQPRSATRGPSFRPILLPKVVHVHDDPPHSSLRPRGSRSRQLQPTVRRPLLAPNQFHSPRQPPPLSDDPGILGPRPLAPNSTRDPPPRPITPGPSNTHGLRPLSVLPRASPRRGLLPNPRRHRTSTGHIPPTTTSRPTGPPSRLQRPVHLYQSSPHTPNFRPSSIRKDALLQTGPRLGHLECLGQPANLRTSERSPPTKRRLPRSSEPNRLPKPLPEATLAPSYRHRRSYPFLPNPPAALPSIAYTSSRGKIHHSLPKGALPKEGAPPPPRRLPSPAPHPQLPLRDLGRTPGFPTPPKTPTRTPESRITASPTDIAPLDSDPVLSVRTEVHAPERRTFMDPEALRSALASLPSPPRSVGIIHTAPQTVLPANPPSPTRHLPPTSPPWILQSPVGEDAIVDSEDDSISSFYSHDFDSPSGPLRSQSPSRFRLYLRSPSTSSGIEPWSPASYDYGSAPDTD</sequence>
<reference key="1">
    <citation type="journal article" date="1992" name="Plant Mol. Biol.">
        <title>Genomic RNA sequence of turnip yellow mosaic virus isolate TYMC, a cDNA-based clone with verified infectivity.</title>
        <authorList>
            <person name="Dreher T.W."/>
            <person name="Bransom K.L."/>
        </authorList>
    </citation>
    <scope>NUCLEOTIDE SEQUENCE [GENOMIC RNA]</scope>
</reference>
<accession>P28478</accession>
<feature type="chain" id="PRO_0000222945" description="69 kDa protein">
    <location>
        <begin position="1"/>
        <end position="628"/>
    </location>
</feature>
<feature type="region of interest" description="Disordered" evidence="2">
    <location>
        <begin position="1"/>
        <end position="25"/>
    </location>
</feature>
<feature type="region of interest" description="Disordered" evidence="2">
    <location>
        <begin position="141"/>
        <end position="332"/>
    </location>
</feature>
<feature type="region of interest" description="Disordered" evidence="2">
    <location>
        <begin position="347"/>
        <end position="398"/>
    </location>
</feature>
<feature type="region of interest" description="Disordered" evidence="2">
    <location>
        <begin position="418"/>
        <end position="507"/>
    </location>
</feature>
<feature type="region of interest" description="Disordered" evidence="2">
    <location>
        <begin position="535"/>
        <end position="628"/>
    </location>
</feature>
<feature type="compositionally biased region" description="Low complexity" evidence="2">
    <location>
        <begin position="299"/>
        <end position="312"/>
    </location>
</feature>
<feature type="compositionally biased region" description="Polar residues" evidence="2">
    <location>
        <begin position="320"/>
        <end position="331"/>
    </location>
</feature>
<feature type="compositionally biased region" description="Pro residues" evidence="2">
    <location>
        <begin position="434"/>
        <end position="450"/>
    </location>
</feature>
<feature type="compositionally biased region" description="Basic and acidic residues" evidence="2">
    <location>
        <begin position="497"/>
        <end position="507"/>
    </location>
</feature>
<organismHost>
    <name type="scientific">Brassica</name>
    <dbReference type="NCBI Taxonomy" id="3705"/>
</organismHost>
<organismHost>
    <name type="scientific">Cardamine lilacina</name>
    <dbReference type="NCBI Taxonomy" id="82359"/>
</organismHost>
<organism>
    <name type="scientific">Turnip yellow mosaic virus (isolate TYMC)</name>
    <dbReference type="NCBI Taxonomy" id="31751"/>
    <lineage>
        <taxon>Viruses</taxon>
        <taxon>Riboviria</taxon>
        <taxon>Orthornavirae</taxon>
        <taxon>Kitrinoviricota</taxon>
        <taxon>Alsuviricetes</taxon>
        <taxon>Tymovirales</taxon>
        <taxon>Tymoviridae</taxon>
        <taxon>Tymovirus</taxon>
        <taxon>Tymovirus brassicae</taxon>
    </lineage>
</organism>
<dbReference type="EMBL" id="X16378">
    <property type="protein sequence ID" value="CAA34414.1"/>
    <property type="molecule type" value="Genomic_RNA"/>
</dbReference>
<dbReference type="PIR" id="S19150">
    <property type="entry name" value="S19150"/>
</dbReference>
<dbReference type="GO" id="GO:0052170">
    <property type="term" value="P:symbiont-mediated suppression of host innate immune response"/>
    <property type="evidence" value="ECO:0007669"/>
    <property type="project" value="UniProtKB-KW"/>
</dbReference>
<dbReference type="InterPro" id="IPR004935">
    <property type="entry name" value="45/70kDa_tymovirus"/>
</dbReference>
<dbReference type="Pfam" id="PF03251">
    <property type="entry name" value="Tymo_45kd_70kd"/>
    <property type="match status" value="1"/>
</dbReference>
<name>P69_TYMVC</name>
<comment type="function">
    <text evidence="1">Acts as a suppressor of RNA-mediated gene silencing, also known as post-transcriptional gene silencing (PTGS), a mechanism of plant viral defense that limits the accumulation of viral RNAs.</text>
</comment>
<comment type="similarity">
    <text evidence="3">Belongs to the tymoviridae protein p69 family.</text>
</comment>
<protein>
    <recommendedName>
        <fullName>69 kDa protein</fullName>
    </recommendedName>
    <alternativeName>
        <fullName>p69</fullName>
    </alternativeName>
</protein>
<proteinExistence type="inferred from homology"/>
<keyword id="KW-0945">Host-virus interaction</keyword>
<keyword id="KW-1090">Inhibition of host innate immune response by virus</keyword>
<keyword id="KW-0941">Suppressor of RNA silencing</keyword>
<keyword id="KW-0899">Viral immunoevasion</keyword>
<evidence type="ECO:0000250" key="1"/>
<evidence type="ECO:0000256" key="2">
    <source>
        <dbReference type="SAM" id="MobiDB-lite"/>
    </source>
</evidence>
<evidence type="ECO:0000305" key="3"/>